<keyword id="KW-0150">Chloroplast</keyword>
<keyword id="KW-0934">Plastid</keyword>
<keyword id="KW-0687">Ribonucleoprotein</keyword>
<keyword id="KW-0689">Ribosomal protein</keyword>
<keyword id="KW-0694">RNA-binding</keyword>
<keyword id="KW-0699">rRNA-binding</keyword>
<evidence type="ECO:0000250" key="1"/>
<evidence type="ECO:0000305" key="2"/>
<name>RR12_MARPO</name>
<accession>P06368</accession>
<geneLocation type="chloroplast"/>
<gene>
    <name type="primary">rps12</name>
</gene>
<proteinExistence type="inferred from homology"/>
<organism>
    <name type="scientific">Marchantia polymorpha</name>
    <name type="common">Common liverwort</name>
    <name type="synonym">Marchantia aquatica</name>
    <dbReference type="NCBI Taxonomy" id="3197"/>
    <lineage>
        <taxon>Eukaryota</taxon>
        <taxon>Viridiplantae</taxon>
        <taxon>Streptophyta</taxon>
        <taxon>Embryophyta</taxon>
        <taxon>Marchantiophyta</taxon>
        <taxon>Marchantiopsida</taxon>
        <taxon>Marchantiidae</taxon>
        <taxon>Marchantiales</taxon>
        <taxon>Marchantiaceae</taxon>
        <taxon>Marchantia</taxon>
    </lineage>
</organism>
<comment type="function">
    <text evidence="1">With S4 and S5 plays an important role in translational accuracy. Located at the interface of the 30S and 50S subunits (By similarity).</text>
</comment>
<comment type="subunit">
    <text>Part of the 30S ribosomal subunit.</text>
</comment>
<comment type="subcellular location">
    <subcellularLocation>
        <location>Plastid</location>
        <location>Chloroplast</location>
    </subcellularLocation>
</comment>
<comment type="similarity">
    <text evidence="2">Belongs to the universal ribosomal protein uS12 family.</text>
</comment>
<sequence>MPTIQQLIRNKRQPIENRTKSPALKGCPQRRGVCTRVYTTTPKKPNSALRKIARVRLTSGFEITAYIPGIGHNLQEHSVVLVRGGRVKDLPGVRYHIIRGTLDAVGVKDRQQGRSKYGVKKSK</sequence>
<protein>
    <recommendedName>
        <fullName evidence="2">Small ribosomal subunit protein uS12c</fullName>
    </recommendedName>
    <alternativeName>
        <fullName>30S ribosomal protein S12, chloroplastic</fullName>
    </alternativeName>
</protein>
<feature type="chain" id="PRO_0000146407" description="Small ribosomal subunit protein uS12c">
    <location>
        <begin position="1"/>
        <end position="123"/>
    </location>
</feature>
<dbReference type="EMBL" id="X04465">
    <property type="protein sequence ID" value="CAA28056.1"/>
    <property type="molecule type" value="Genomic_DNA"/>
</dbReference>
<dbReference type="EMBL" id="X03661">
    <property type="protein sequence ID" value="CAA27297.1"/>
    <property type="molecule type" value="Genomic_DNA"/>
</dbReference>
<dbReference type="EMBL" id="X03698">
    <property type="protein sequence ID" value="CAA27297.1"/>
    <property type="status" value="JOINED"/>
    <property type="molecule type" value="Genomic_DNA"/>
</dbReference>
<dbReference type="PIR" id="A02729">
    <property type="entry name" value="R3LV12"/>
</dbReference>
<dbReference type="RefSeq" id="NP_039270.1">
    <property type="nucleotide sequence ID" value="NC_001319.1"/>
</dbReference>
<dbReference type="RefSeq" id="YP_009646786.1">
    <property type="nucleotide sequence ID" value="NC_042505.1"/>
</dbReference>
<dbReference type="SMR" id="P06368"/>
<dbReference type="GeneID" id="2702530"/>
<dbReference type="GeneID" id="40386673"/>
<dbReference type="GO" id="GO:0009507">
    <property type="term" value="C:chloroplast"/>
    <property type="evidence" value="ECO:0007669"/>
    <property type="project" value="UniProtKB-SubCell"/>
</dbReference>
<dbReference type="GO" id="GO:0015935">
    <property type="term" value="C:small ribosomal subunit"/>
    <property type="evidence" value="ECO:0007669"/>
    <property type="project" value="InterPro"/>
</dbReference>
<dbReference type="GO" id="GO:0019843">
    <property type="term" value="F:rRNA binding"/>
    <property type="evidence" value="ECO:0007669"/>
    <property type="project" value="UniProtKB-UniRule"/>
</dbReference>
<dbReference type="GO" id="GO:0003735">
    <property type="term" value="F:structural constituent of ribosome"/>
    <property type="evidence" value="ECO:0007669"/>
    <property type="project" value="InterPro"/>
</dbReference>
<dbReference type="GO" id="GO:0006412">
    <property type="term" value="P:translation"/>
    <property type="evidence" value="ECO:0007669"/>
    <property type="project" value="UniProtKB-UniRule"/>
</dbReference>
<dbReference type="CDD" id="cd03368">
    <property type="entry name" value="Ribosomal_S12"/>
    <property type="match status" value="1"/>
</dbReference>
<dbReference type="FunFam" id="2.40.50.140:FF:000008">
    <property type="entry name" value="30S ribosomal protein S12, chloroplastic"/>
    <property type="match status" value="1"/>
</dbReference>
<dbReference type="Gene3D" id="2.40.50.140">
    <property type="entry name" value="Nucleic acid-binding proteins"/>
    <property type="match status" value="1"/>
</dbReference>
<dbReference type="HAMAP" id="MF_00403_B">
    <property type="entry name" value="Ribosomal_uS12_B"/>
    <property type="match status" value="1"/>
</dbReference>
<dbReference type="InterPro" id="IPR012340">
    <property type="entry name" value="NA-bd_OB-fold"/>
</dbReference>
<dbReference type="InterPro" id="IPR006032">
    <property type="entry name" value="Ribosomal_uS12"/>
</dbReference>
<dbReference type="InterPro" id="IPR005679">
    <property type="entry name" value="Ribosomal_uS12_bac"/>
</dbReference>
<dbReference type="NCBIfam" id="TIGR00981">
    <property type="entry name" value="rpsL_bact"/>
    <property type="match status" value="1"/>
</dbReference>
<dbReference type="PANTHER" id="PTHR11652">
    <property type="entry name" value="30S RIBOSOMAL PROTEIN S12 FAMILY MEMBER"/>
    <property type="match status" value="1"/>
</dbReference>
<dbReference type="Pfam" id="PF00164">
    <property type="entry name" value="Ribosom_S12_S23"/>
    <property type="match status" value="1"/>
</dbReference>
<dbReference type="PIRSF" id="PIRSF002133">
    <property type="entry name" value="Ribosomal_S12/S23"/>
    <property type="match status" value="1"/>
</dbReference>
<dbReference type="PRINTS" id="PR01034">
    <property type="entry name" value="RIBOSOMALS12"/>
</dbReference>
<dbReference type="SUPFAM" id="SSF50249">
    <property type="entry name" value="Nucleic acid-binding proteins"/>
    <property type="match status" value="1"/>
</dbReference>
<dbReference type="PROSITE" id="PS00055">
    <property type="entry name" value="RIBOSOMAL_S12"/>
    <property type="match status" value="1"/>
</dbReference>
<reference key="1">
    <citation type="journal article" date="1986" name="FEBS Lett.">
        <title>Coding sequences for chloroplast ribosomal protein S12 from the liverwort, Marchantia polymorpha, are separated far apart on the different DNA strands.</title>
        <authorList>
            <person name="Fukuzawa H."/>
            <person name="Kohchi T."/>
            <person name="Shirai H."/>
            <person name="Ohyama K."/>
            <person name="Umesono K."/>
            <person name="Inokuchi H."/>
            <person name="Ozeki H."/>
        </authorList>
    </citation>
    <scope>NUCLEOTIDE SEQUENCE [GENOMIC DNA]</scope>
</reference>
<reference key="2">
    <citation type="journal article" date="1986" name="Nature">
        <title>Chloroplast gene organization deduced from complete sequence of liverwort Marchantia polymorpha chloroplast DNA.</title>
        <authorList>
            <person name="Ohyama K."/>
            <person name="Fukuzawa H."/>
            <person name="Kohchi T."/>
            <person name="Shirai H."/>
            <person name="Sano T."/>
            <person name="Sano S."/>
            <person name="Umesono K."/>
            <person name="Shiki Y."/>
            <person name="Takeuchi M."/>
            <person name="Chang Z."/>
            <person name="Aota S."/>
            <person name="Inokuchi H."/>
            <person name="Ozeki H."/>
        </authorList>
    </citation>
    <scope>NUCLEOTIDE SEQUENCE [LARGE SCALE GENOMIC DNA]</scope>
</reference>
<reference key="3">
    <citation type="journal article" date="1988" name="J. Mol. Biol.">
        <title>Structure and organization of Marchantia polymorpha chloroplast genome. III. Gene organization of the large single copy region from rbcL to trnI(CAU).</title>
        <authorList>
            <person name="Fukuzawa H."/>
            <person name="Kohchi T."/>
            <person name="Sano T."/>
            <person name="Shirai H."/>
            <person name="Umesono K."/>
            <person name="Inokuchi H."/>
            <person name="Ozeki H."/>
            <person name="Ohyama K."/>
        </authorList>
    </citation>
    <scope>NUCLEOTIDE SEQUENCE [GENOMIC DNA] OF 1-38</scope>
</reference>
<reference key="4">
    <citation type="journal article" date="1988" name="J. Mol. Biol.">
        <title>Structure and organization of Marchantia polymorpha chloroplast genome. II. Gene organization of the large single copy region from rps'12 to atpB.</title>
        <authorList>
            <person name="Umesono K."/>
            <person name="Inokuchi H."/>
            <person name="Shiki Y."/>
            <person name="Takeuchi M."/>
            <person name="Chang Z."/>
            <person name="Fukuzawa H."/>
            <person name="Kohchi T."/>
            <person name="Shirai H."/>
            <person name="Ohyama K."/>
            <person name="Ozeki H."/>
        </authorList>
    </citation>
    <scope>NUCLEOTIDE SEQUENCE [GENOMIC DNA] OF 39-123</scope>
</reference>